<reference key="1">
    <citation type="journal article" date="2004" name="Proc. Natl. Acad. Sci. U.S.A.">
        <title>Insights into the evolution of Yersinia pestis through whole-genome comparison with Yersinia pseudotuberculosis.</title>
        <authorList>
            <person name="Chain P.S.G."/>
            <person name="Carniel E."/>
            <person name="Larimer F.W."/>
            <person name="Lamerdin J."/>
            <person name="Stoutland P.O."/>
            <person name="Regala W.M."/>
            <person name="Georgescu A.M."/>
            <person name="Vergez L.M."/>
            <person name="Land M.L."/>
            <person name="Motin V.L."/>
            <person name="Brubaker R.R."/>
            <person name="Fowler J."/>
            <person name="Hinnebusch J."/>
            <person name="Marceau M."/>
            <person name="Medigue C."/>
            <person name="Simonet M."/>
            <person name="Chenal-Francisque V."/>
            <person name="Souza B."/>
            <person name="Dacheux D."/>
            <person name="Elliott J.M."/>
            <person name="Derbise A."/>
            <person name="Hauser L.J."/>
            <person name="Garcia E."/>
        </authorList>
    </citation>
    <scope>NUCLEOTIDE SEQUENCE [LARGE SCALE GENOMIC DNA]</scope>
    <source>
        <strain>IP32953</strain>
    </source>
</reference>
<dbReference type="EMBL" id="BX936398">
    <property type="protein sequence ID" value="CAH23070.1"/>
    <property type="molecule type" value="Genomic_DNA"/>
</dbReference>
<dbReference type="RefSeq" id="WP_002209553.1">
    <property type="nucleotide sequence ID" value="NZ_CP009712.1"/>
</dbReference>
<dbReference type="SMR" id="Q664D7"/>
<dbReference type="KEGG" id="ypo:BZ17_2752"/>
<dbReference type="KEGG" id="yps:YPTB3832"/>
<dbReference type="PATRIC" id="fig|273123.14.peg.2885"/>
<dbReference type="Proteomes" id="UP000001011">
    <property type="component" value="Chromosome"/>
</dbReference>
<dbReference type="GO" id="GO:0005886">
    <property type="term" value="C:plasma membrane"/>
    <property type="evidence" value="ECO:0007669"/>
    <property type="project" value="UniProtKB-SubCell"/>
</dbReference>
<dbReference type="GO" id="GO:0015138">
    <property type="term" value="F:fumarate transmembrane transporter activity"/>
    <property type="evidence" value="ECO:0007669"/>
    <property type="project" value="TreeGrafter"/>
</dbReference>
<dbReference type="GO" id="GO:0015366">
    <property type="term" value="F:malate:proton symporter activity"/>
    <property type="evidence" value="ECO:0007669"/>
    <property type="project" value="TreeGrafter"/>
</dbReference>
<dbReference type="GO" id="GO:0015141">
    <property type="term" value="F:succinate transmembrane transporter activity"/>
    <property type="evidence" value="ECO:0007669"/>
    <property type="project" value="TreeGrafter"/>
</dbReference>
<dbReference type="GO" id="GO:0070778">
    <property type="term" value="P:L-aspartate transmembrane transport"/>
    <property type="evidence" value="ECO:0007669"/>
    <property type="project" value="TreeGrafter"/>
</dbReference>
<dbReference type="FunFam" id="1.10.3860.10:FF:000001">
    <property type="entry name" value="C4-dicarboxylate transport protein"/>
    <property type="match status" value="1"/>
</dbReference>
<dbReference type="Gene3D" id="1.10.3860.10">
    <property type="entry name" value="Sodium:dicarboxylate symporter"/>
    <property type="match status" value="1"/>
</dbReference>
<dbReference type="HAMAP" id="MF_01300">
    <property type="entry name" value="C4_dicarb_transport"/>
    <property type="match status" value="1"/>
</dbReference>
<dbReference type="InterPro" id="IPR023954">
    <property type="entry name" value="C4_dicarb_transport"/>
</dbReference>
<dbReference type="InterPro" id="IPR001991">
    <property type="entry name" value="Na-dicarboxylate_symporter"/>
</dbReference>
<dbReference type="InterPro" id="IPR018107">
    <property type="entry name" value="Na-dicarboxylate_symporter_CS"/>
</dbReference>
<dbReference type="InterPro" id="IPR036458">
    <property type="entry name" value="Na:dicarbo_symporter_sf"/>
</dbReference>
<dbReference type="NCBIfam" id="NF002461">
    <property type="entry name" value="PRK01663.1"/>
    <property type="match status" value="1"/>
</dbReference>
<dbReference type="NCBIfam" id="NF009587">
    <property type="entry name" value="PRK13027.1"/>
    <property type="match status" value="1"/>
</dbReference>
<dbReference type="PANTHER" id="PTHR42865:SF1">
    <property type="entry name" value="AEROBIC C4-DICARBOXYLATE TRANSPORT PROTEIN"/>
    <property type="match status" value="1"/>
</dbReference>
<dbReference type="PANTHER" id="PTHR42865">
    <property type="entry name" value="PROTON/GLUTAMATE-ASPARTATE SYMPORTER"/>
    <property type="match status" value="1"/>
</dbReference>
<dbReference type="Pfam" id="PF00375">
    <property type="entry name" value="SDF"/>
    <property type="match status" value="1"/>
</dbReference>
<dbReference type="PRINTS" id="PR00173">
    <property type="entry name" value="EDTRNSPORT"/>
</dbReference>
<dbReference type="SUPFAM" id="SSF118215">
    <property type="entry name" value="Proton glutamate symport protein"/>
    <property type="match status" value="1"/>
</dbReference>
<dbReference type="PROSITE" id="PS00713">
    <property type="entry name" value="NA_DICARBOXYL_SYMP_1"/>
    <property type="match status" value="1"/>
</dbReference>
<dbReference type="PROSITE" id="PS00714">
    <property type="entry name" value="NA_DICARBOXYL_SYMP_2"/>
    <property type="match status" value="1"/>
</dbReference>
<organism>
    <name type="scientific">Yersinia pseudotuberculosis serotype I (strain IP32953)</name>
    <dbReference type="NCBI Taxonomy" id="273123"/>
    <lineage>
        <taxon>Bacteria</taxon>
        <taxon>Pseudomonadati</taxon>
        <taxon>Pseudomonadota</taxon>
        <taxon>Gammaproteobacteria</taxon>
        <taxon>Enterobacterales</taxon>
        <taxon>Yersiniaceae</taxon>
        <taxon>Yersinia</taxon>
    </lineage>
</organism>
<protein>
    <recommendedName>
        <fullName evidence="1">C4-dicarboxylate transport protein</fullName>
    </recommendedName>
</protein>
<evidence type="ECO:0000255" key="1">
    <source>
        <dbReference type="HAMAP-Rule" id="MF_01300"/>
    </source>
</evidence>
<sequence length="429" mass="45498">MKVSIFKTLYFQVLTAITIGVLLGHFYPEIGAQMKPLGDGFVKLIKMIIAPVIFCTVVTGIAGMESMKAVGRTGAIALLYFEIVSTLALLIGLVVVNVAQPGVGMNIDPATLDAKAVALYAEQASQQGIIPFLLDIIPGSVVGAFASGNILQVLLFAVLFGFALHRLGEKGQLIFNVIESFSRVIFGVINMIMRLAPLGAFGAMAFTIGKYGVGSLVQLGQLILCFYLTCILFVVLVLGTIAKFNGFNIFKFIRYIKEELLIVLGTSSSESVLPRMLDKMENAGCKKSVVGLVIPTGYSFNLDGTSIYLTMAAVFIAQATNTHMDIMHQVTLLVVLLLSSKGAAGVTGSGFIVLAATISAVGHLPLAGLALILGIDRFMSEARALTNLVGNGVATIVVAKWCKQLDNDQLQAVLSNKVLPNVKSSVSVS</sequence>
<name>DCTA_YERPS</name>
<accession>Q664D7</accession>
<gene>
    <name evidence="1" type="primary">dctA</name>
    <name type="ordered locus">YPTB3832</name>
</gene>
<feature type="chain" id="PRO_1000067478" description="C4-dicarboxylate transport protein">
    <location>
        <begin position="1"/>
        <end position="429"/>
    </location>
</feature>
<feature type="transmembrane region" description="Helical" evidence="1">
    <location>
        <begin position="3"/>
        <end position="23"/>
    </location>
</feature>
<feature type="transmembrane region" description="Helical" evidence="1">
    <location>
        <begin position="44"/>
        <end position="64"/>
    </location>
</feature>
<feature type="transmembrane region" description="Helical" evidence="1">
    <location>
        <begin position="76"/>
        <end position="96"/>
    </location>
</feature>
<feature type="transmembrane region" description="Helical" evidence="1">
    <location>
        <begin position="144"/>
        <end position="164"/>
    </location>
</feature>
<feature type="transmembrane region" description="Helical" evidence="1">
    <location>
        <begin position="184"/>
        <end position="204"/>
    </location>
</feature>
<feature type="transmembrane region" description="Helical" evidence="1">
    <location>
        <begin position="222"/>
        <end position="242"/>
    </location>
</feature>
<feature type="transmembrane region" description="Helical" evidence="1">
    <location>
        <begin position="331"/>
        <end position="351"/>
    </location>
</feature>
<feature type="transmembrane region" description="Helical" evidence="1">
    <location>
        <begin position="352"/>
        <end position="372"/>
    </location>
</feature>
<keyword id="KW-0997">Cell inner membrane</keyword>
<keyword id="KW-1003">Cell membrane</keyword>
<keyword id="KW-0472">Membrane</keyword>
<keyword id="KW-0769">Symport</keyword>
<keyword id="KW-0812">Transmembrane</keyword>
<keyword id="KW-1133">Transmembrane helix</keyword>
<keyword id="KW-0813">Transport</keyword>
<proteinExistence type="inferred from homology"/>
<comment type="function">
    <text evidence="1">Responsible for the transport of dicarboxylates such as succinate, fumarate, and malate from the periplasm across the membrane.</text>
</comment>
<comment type="subcellular location">
    <subcellularLocation>
        <location evidence="1">Cell inner membrane</location>
        <topology evidence="1">Multi-pass membrane protein</topology>
    </subcellularLocation>
</comment>
<comment type="similarity">
    <text evidence="1">Belongs to the dicarboxylate/amino acid:cation symporter (DAACS) (TC 2.A.23) family.</text>
</comment>